<protein>
    <recommendedName>
        <fullName evidence="2">D-alanine--D-alanine ligase</fullName>
        <ecNumber evidence="2">6.3.2.4</ecNumber>
    </recommendedName>
    <alternativeName>
        <fullName evidence="2">D-Ala-D-Ala ligase</fullName>
    </alternativeName>
    <alternativeName>
        <fullName evidence="2">D-alanylalanine synthetase</fullName>
    </alternativeName>
</protein>
<gene>
    <name evidence="2" type="primary">ddl</name>
    <name type="ordered locus">Helmi_24820</name>
    <name type="ORF">HM1_2570</name>
</gene>
<name>DDL_HELMI</name>
<proteinExistence type="inferred from homology"/>
<sequence length="366" mass="40306">MMKQTIAVICGGRSGEHEVSLTSAQSIVDALDRFRFNVLTIGIDRHGAWWLGSNVIDNLRKGQQPYGQRVYFIPDPTCPGLIEENPVTRKPVPVDVFFPVLHGPNGEDGTIQGLFEAANVPYVGCGVLASACGMDKAIMKALFAQSDLPQLPYLVVLRNRWESAREQVIDEVEDRLGYPCFVKPANMGSSVGISKATNRAELVAAFDDAVRYDRKLIVEKGINVREIEVSVLGNDEVVASVPGEIVPAHEFYDYDAKYAAADSRLLIPAPIAAADVATFQEMAIRAFRAIDGSGLSRVDFLLDKNSGEVYINEINTLPGFTSISMYPKLWEATGIPYGELLSRLVDLGLARYREKQRNATERLPRL</sequence>
<reference key="1">
    <citation type="journal article" date="2008" name="J. Bacteriol.">
        <title>The genome of Heliobacterium modesticaldum, a phototrophic representative of the Firmicutes containing the simplest photosynthetic apparatus.</title>
        <authorList>
            <person name="Sattley W.M."/>
            <person name="Madigan M.T."/>
            <person name="Swingley W.D."/>
            <person name="Cheung P.C."/>
            <person name="Clocksin K.M."/>
            <person name="Conrad A.L."/>
            <person name="Dejesa L.C."/>
            <person name="Honchak B.M."/>
            <person name="Jung D.O."/>
            <person name="Karbach L.E."/>
            <person name="Kurdoglu A."/>
            <person name="Lahiri S."/>
            <person name="Mastrian S.D."/>
            <person name="Page L.E."/>
            <person name="Taylor H.L."/>
            <person name="Wang Z.T."/>
            <person name="Raymond J."/>
            <person name="Chen M."/>
            <person name="Blankenship R.E."/>
            <person name="Touchman J.W."/>
        </authorList>
    </citation>
    <scope>NUCLEOTIDE SEQUENCE [LARGE SCALE GENOMIC DNA]</scope>
    <source>
        <strain>ATCC 51547 / Ice1</strain>
    </source>
</reference>
<dbReference type="EC" id="6.3.2.4" evidence="2"/>
<dbReference type="EMBL" id="CP000930">
    <property type="protein sequence ID" value="ABZ85107.1"/>
    <property type="molecule type" value="Genomic_DNA"/>
</dbReference>
<dbReference type="RefSeq" id="WP_012283601.1">
    <property type="nucleotide sequence ID" value="NC_010337.2"/>
</dbReference>
<dbReference type="SMR" id="B0TAZ6"/>
<dbReference type="STRING" id="498761.HM1_2570"/>
<dbReference type="KEGG" id="hmo:HM1_2570"/>
<dbReference type="eggNOG" id="COG1181">
    <property type="taxonomic scope" value="Bacteria"/>
</dbReference>
<dbReference type="HOGENOM" id="CLU_039268_0_0_9"/>
<dbReference type="OrthoDB" id="9813261at2"/>
<dbReference type="UniPathway" id="UPA00219"/>
<dbReference type="Proteomes" id="UP000008550">
    <property type="component" value="Chromosome"/>
</dbReference>
<dbReference type="GO" id="GO:0005829">
    <property type="term" value="C:cytosol"/>
    <property type="evidence" value="ECO:0007669"/>
    <property type="project" value="TreeGrafter"/>
</dbReference>
<dbReference type="GO" id="GO:0005524">
    <property type="term" value="F:ATP binding"/>
    <property type="evidence" value="ECO:0007669"/>
    <property type="project" value="UniProtKB-KW"/>
</dbReference>
<dbReference type="GO" id="GO:0008716">
    <property type="term" value="F:D-alanine-D-alanine ligase activity"/>
    <property type="evidence" value="ECO:0007669"/>
    <property type="project" value="UniProtKB-UniRule"/>
</dbReference>
<dbReference type="GO" id="GO:0046872">
    <property type="term" value="F:metal ion binding"/>
    <property type="evidence" value="ECO:0007669"/>
    <property type="project" value="UniProtKB-KW"/>
</dbReference>
<dbReference type="GO" id="GO:0071555">
    <property type="term" value="P:cell wall organization"/>
    <property type="evidence" value="ECO:0007669"/>
    <property type="project" value="UniProtKB-KW"/>
</dbReference>
<dbReference type="GO" id="GO:0009252">
    <property type="term" value="P:peptidoglycan biosynthetic process"/>
    <property type="evidence" value="ECO:0007669"/>
    <property type="project" value="UniProtKB-UniRule"/>
</dbReference>
<dbReference type="GO" id="GO:0008360">
    <property type="term" value="P:regulation of cell shape"/>
    <property type="evidence" value="ECO:0007669"/>
    <property type="project" value="UniProtKB-KW"/>
</dbReference>
<dbReference type="FunFam" id="3.30.1490.20:FF:000007">
    <property type="entry name" value="D-alanine--D-alanine ligase"/>
    <property type="match status" value="1"/>
</dbReference>
<dbReference type="FunFam" id="3.30.470.20:FF:000008">
    <property type="entry name" value="D-alanine--D-alanine ligase"/>
    <property type="match status" value="1"/>
</dbReference>
<dbReference type="Gene3D" id="3.40.50.20">
    <property type="match status" value="1"/>
</dbReference>
<dbReference type="Gene3D" id="3.30.1490.20">
    <property type="entry name" value="ATP-grasp fold, A domain"/>
    <property type="match status" value="1"/>
</dbReference>
<dbReference type="Gene3D" id="3.30.470.20">
    <property type="entry name" value="ATP-grasp fold, B domain"/>
    <property type="match status" value="1"/>
</dbReference>
<dbReference type="HAMAP" id="MF_00047">
    <property type="entry name" value="Dala_Dala_lig"/>
    <property type="match status" value="1"/>
</dbReference>
<dbReference type="InterPro" id="IPR011761">
    <property type="entry name" value="ATP-grasp"/>
</dbReference>
<dbReference type="InterPro" id="IPR013815">
    <property type="entry name" value="ATP_grasp_subdomain_1"/>
</dbReference>
<dbReference type="InterPro" id="IPR000291">
    <property type="entry name" value="D-Ala_lig_Van_CS"/>
</dbReference>
<dbReference type="InterPro" id="IPR005905">
    <property type="entry name" value="D_ala_D_ala"/>
</dbReference>
<dbReference type="InterPro" id="IPR011095">
    <property type="entry name" value="Dala_Dala_lig_C"/>
</dbReference>
<dbReference type="InterPro" id="IPR011127">
    <property type="entry name" value="Dala_Dala_lig_N"/>
</dbReference>
<dbReference type="InterPro" id="IPR016185">
    <property type="entry name" value="PreATP-grasp_dom_sf"/>
</dbReference>
<dbReference type="NCBIfam" id="TIGR01205">
    <property type="entry name" value="D_ala_D_alaTIGR"/>
    <property type="match status" value="1"/>
</dbReference>
<dbReference type="NCBIfam" id="NF002526">
    <property type="entry name" value="PRK01966.1-2"/>
    <property type="match status" value="1"/>
</dbReference>
<dbReference type="NCBIfam" id="NF002528">
    <property type="entry name" value="PRK01966.1-4"/>
    <property type="match status" value="1"/>
</dbReference>
<dbReference type="PANTHER" id="PTHR23132">
    <property type="entry name" value="D-ALANINE--D-ALANINE LIGASE"/>
    <property type="match status" value="1"/>
</dbReference>
<dbReference type="PANTHER" id="PTHR23132:SF25">
    <property type="entry name" value="D-ALANINE--D-ALANINE LIGASE A"/>
    <property type="match status" value="1"/>
</dbReference>
<dbReference type="Pfam" id="PF07478">
    <property type="entry name" value="Dala_Dala_lig_C"/>
    <property type="match status" value="1"/>
</dbReference>
<dbReference type="Pfam" id="PF01820">
    <property type="entry name" value="Dala_Dala_lig_N"/>
    <property type="match status" value="1"/>
</dbReference>
<dbReference type="PIRSF" id="PIRSF039102">
    <property type="entry name" value="Ddl/VanB"/>
    <property type="match status" value="1"/>
</dbReference>
<dbReference type="SUPFAM" id="SSF56059">
    <property type="entry name" value="Glutathione synthetase ATP-binding domain-like"/>
    <property type="match status" value="1"/>
</dbReference>
<dbReference type="SUPFAM" id="SSF52440">
    <property type="entry name" value="PreATP-grasp domain"/>
    <property type="match status" value="1"/>
</dbReference>
<dbReference type="PROSITE" id="PS50975">
    <property type="entry name" value="ATP_GRASP"/>
    <property type="match status" value="1"/>
</dbReference>
<dbReference type="PROSITE" id="PS00843">
    <property type="entry name" value="DALA_DALA_LIGASE_1"/>
    <property type="match status" value="1"/>
</dbReference>
<dbReference type="PROSITE" id="PS00844">
    <property type="entry name" value="DALA_DALA_LIGASE_2"/>
    <property type="match status" value="1"/>
</dbReference>
<organism>
    <name type="scientific">Heliobacterium modesticaldum (strain ATCC 51547 / Ice1)</name>
    <dbReference type="NCBI Taxonomy" id="498761"/>
    <lineage>
        <taxon>Bacteria</taxon>
        <taxon>Bacillati</taxon>
        <taxon>Bacillota</taxon>
        <taxon>Clostridia</taxon>
        <taxon>Eubacteriales</taxon>
        <taxon>Heliobacteriaceae</taxon>
        <taxon>Heliomicrobium</taxon>
    </lineage>
</organism>
<comment type="function">
    <text evidence="2">Cell wall formation.</text>
</comment>
<comment type="catalytic activity">
    <reaction evidence="2">
        <text>2 D-alanine + ATP = D-alanyl-D-alanine + ADP + phosphate + H(+)</text>
        <dbReference type="Rhea" id="RHEA:11224"/>
        <dbReference type="ChEBI" id="CHEBI:15378"/>
        <dbReference type="ChEBI" id="CHEBI:30616"/>
        <dbReference type="ChEBI" id="CHEBI:43474"/>
        <dbReference type="ChEBI" id="CHEBI:57416"/>
        <dbReference type="ChEBI" id="CHEBI:57822"/>
        <dbReference type="ChEBI" id="CHEBI:456216"/>
        <dbReference type="EC" id="6.3.2.4"/>
    </reaction>
</comment>
<comment type="cofactor">
    <cofactor evidence="1">
        <name>Mg(2+)</name>
        <dbReference type="ChEBI" id="CHEBI:18420"/>
    </cofactor>
    <cofactor evidence="1">
        <name>Mn(2+)</name>
        <dbReference type="ChEBI" id="CHEBI:29035"/>
    </cofactor>
    <text evidence="1">Binds 2 magnesium or manganese ions per subunit.</text>
</comment>
<comment type="pathway">
    <text evidence="2">Cell wall biogenesis; peptidoglycan biosynthesis.</text>
</comment>
<comment type="subcellular location">
    <subcellularLocation>
        <location evidence="2">Cytoplasm</location>
    </subcellularLocation>
</comment>
<comment type="similarity">
    <text evidence="2">Belongs to the D-alanine--D-alanine ligase family.</text>
</comment>
<keyword id="KW-0067">ATP-binding</keyword>
<keyword id="KW-0133">Cell shape</keyword>
<keyword id="KW-0961">Cell wall biogenesis/degradation</keyword>
<keyword id="KW-0963">Cytoplasm</keyword>
<keyword id="KW-0436">Ligase</keyword>
<keyword id="KW-0460">Magnesium</keyword>
<keyword id="KW-0464">Manganese</keyword>
<keyword id="KW-0479">Metal-binding</keyword>
<keyword id="KW-0547">Nucleotide-binding</keyword>
<keyword id="KW-0573">Peptidoglycan synthesis</keyword>
<keyword id="KW-1185">Reference proteome</keyword>
<feature type="chain" id="PRO_0000341109" description="D-alanine--D-alanine ligase">
    <location>
        <begin position="1"/>
        <end position="366"/>
    </location>
</feature>
<feature type="domain" description="ATP-grasp" evidence="2">
    <location>
        <begin position="140"/>
        <end position="346"/>
    </location>
</feature>
<feature type="binding site" evidence="2">
    <location>
        <begin position="173"/>
        <end position="228"/>
    </location>
    <ligand>
        <name>ATP</name>
        <dbReference type="ChEBI" id="CHEBI:30616"/>
    </ligand>
</feature>
<feature type="binding site" evidence="2">
    <location>
        <position position="299"/>
    </location>
    <ligand>
        <name>Mg(2+)</name>
        <dbReference type="ChEBI" id="CHEBI:18420"/>
        <label>1</label>
    </ligand>
</feature>
<feature type="binding site" evidence="2">
    <location>
        <position position="313"/>
    </location>
    <ligand>
        <name>Mg(2+)</name>
        <dbReference type="ChEBI" id="CHEBI:18420"/>
        <label>1</label>
    </ligand>
</feature>
<feature type="binding site" evidence="2">
    <location>
        <position position="313"/>
    </location>
    <ligand>
        <name>Mg(2+)</name>
        <dbReference type="ChEBI" id="CHEBI:18420"/>
        <label>2</label>
    </ligand>
</feature>
<feature type="binding site" evidence="2">
    <location>
        <position position="315"/>
    </location>
    <ligand>
        <name>Mg(2+)</name>
        <dbReference type="ChEBI" id="CHEBI:18420"/>
        <label>2</label>
    </ligand>
</feature>
<evidence type="ECO:0000250" key="1"/>
<evidence type="ECO:0000255" key="2">
    <source>
        <dbReference type="HAMAP-Rule" id="MF_00047"/>
    </source>
</evidence>
<accession>B0TAZ6</accession>